<comment type="function">
    <text evidence="8">Probable chromatin remodeling factor.</text>
</comment>
<comment type="subunit">
    <text evidence="7">Interacts with NRPD1.</text>
</comment>
<comment type="subcellular location">
    <subcellularLocation>
        <location evidence="1 5">Nucleus</location>
    </subcellularLocation>
</comment>
<comment type="similarity">
    <text evidence="9">Belongs to the SNF2/RAD54 helicase family.</text>
</comment>
<comment type="sequence caution" evidence="9">
    <conflict type="erroneous gene model prediction">
        <sequence resource="EMBL-CDS" id="AAF79734"/>
    </conflict>
</comment>
<sequence>MECIGKRVKSRSWQRLQAVNKRKKMETVAPVTSPPKKRRQKKPKNYDSDIEDITPTCNDSVPPPQVSNMYSVPNNSVKESFSRIMRDLNVEKKSGPSSSRLTDGSEQNPCLKERSFRVSDLGVEKKCSPEITDLDVGIPVPRFSKLKDVSEQKNTCLMQKSSPEIADLDLVISVPSSSVLKDVSEEIRFLKDKCSPEIRGLVLEKSVPGEIEILSDSESETEARRRASAKKKLFEESSRIVESISDGEDSSSETDEEEEENQDSEDNNTKDNVTVESLSSEDPSSSSSSSSSSSSSSSSSSSDDESYVKEVVGDNRDDDDLRKASSPIKRVSLVERKALVRYKRSGSSLTKPRERDNKIQKLNHREEEKKERQREVVRVVTKQPSNVVYTCAHCGKENTGNPESHSSFIRPHSIRDEIEDVNNFASTNVSKYEDSVSINSGKTTGAPSRPEVENPETGKELNTPEKPSISRPEIFTTEKAIDVQVPEEPSRPEIYSSEKAKEVQAPEMPSRPEVFSSEKAKEIQVPEMPSIPEIQNSEKAKEVQANNRMGLTTPAVAEGLNKSVVTNEHIEDDSDSSISSGDGYESDPTLKDKEVKINNHSDWRILNGNNKEVDLFRLLVNSVWEKGQLGEEDEADELVSSAEDQSQEQAREDHRKYDDAGLLIIRPPPLIEKFGVEEPQSPPVVSEIDSEEDRLWEELAFFTKSNDIGGNELFSNVEKNISANETPAAQCKKGKHDLCIDLEVGLKCMHCGFVEREIRSMDVSEWGEKTTRERRKFDRFEEEEGSSFIGKLGFDAPNNSLNEGCVSSEGTVWDKIPGVKSQMYPHQQEGFEFIWKNLAGTIMLNELKDFENSDETGGCIMSHAPGTGKTRLTIIFLQAYLQCFPDCKPVIIAPASLLLTWAEEFKKWNISIPFHNLSSLDFTGKENSAALGLLMQKNATARSNNEIRMVKIYSWIKSKSILGISYNLYEKLAGVKDEDKKTKMVREVKPDKELDDIREILMGRPGLLVLDEAHTPRNQRSCIWKTLSKVETQKRILLSGTPFQNNFLELCNVLGLARPKYLERLTSTLKKSGMTVTKRGKKNLGNEINNRGIEELKAVMLPFVHVHKGSILQSSLPGLRECVVVLNPPELQRRVLESIEVTHNRKTKNVFETEHKLSLVSVHPSLVSRCKISEKERLSIDEALLAQLKKVRLDPNQSVKTRFLMEFVELCEVIKEKVLVFSQYIDPLKLIMKHLVSRFKWNPGEEVLYMHGKLEQKQRQTLINEFNDPKSKAKVFLASTKACSEGISLVGASRVILLDVVWNPAVERQAISRAYRIGQKRIVYTYHLVAKGTPEGPKYCKQAQKDRISELVFACSSRHDKGKEKIAEAVTEDKVLDTMVEHSKLGDMFDNLIVQPKEADLVEGFSILMP</sequence>
<dbReference type="EC" id="3.6.4.-"/>
<dbReference type="EMBL" id="AC005106">
    <property type="protein sequence ID" value="AAF79734.1"/>
    <property type="status" value="ALT_SEQ"/>
    <property type="molecule type" value="Genomic_DNA"/>
</dbReference>
<dbReference type="EMBL" id="CP002684">
    <property type="protein sequence ID" value="AEE27845.1"/>
    <property type="molecule type" value="Genomic_DNA"/>
</dbReference>
<dbReference type="EMBL" id="AK226351">
    <property type="protein sequence ID" value="BAE98499.1"/>
    <property type="molecule type" value="mRNA"/>
</dbReference>
<dbReference type="RefSeq" id="NP_172040.2">
    <property type="nucleotide sequence ID" value="NM_100428.4"/>
</dbReference>
<dbReference type="SMR" id="F4I8S3"/>
<dbReference type="BioGRID" id="22293">
    <property type="interactions" value="1"/>
</dbReference>
<dbReference type="FunCoup" id="F4I8S3">
    <property type="interactions" value="135"/>
</dbReference>
<dbReference type="STRING" id="3702.F4I8S3"/>
<dbReference type="iPTMnet" id="F4I8S3"/>
<dbReference type="PaxDb" id="3702-AT1G05490.1"/>
<dbReference type="ProteomicsDB" id="241043"/>
<dbReference type="EnsemblPlants" id="AT1G05490.1">
    <property type="protein sequence ID" value="AT1G05490.1"/>
    <property type="gene ID" value="AT1G05490"/>
</dbReference>
<dbReference type="GeneID" id="837051"/>
<dbReference type="Gramene" id="AT1G05490.1">
    <property type="protein sequence ID" value="AT1G05490.1"/>
    <property type="gene ID" value="AT1G05490"/>
</dbReference>
<dbReference type="KEGG" id="ath:AT1G05490"/>
<dbReference type="Araport" id="AT1G05490"/>
<dbReference type="TAIR" id="AT1G05490">
    <property type="gene designation" value="CHR31"/>
</dbReference>
<dbReference type="eggNOG" id="KOG0390">
    <property type="taxonomic scope" value="Eukaryota"/>
</dbReference>
<dbReference type="HOGENOM" id="CLU_244196_0_0_1"/>
<dbReference type="InParanoid" id="F4I8S3"/>
<dbReference type="OMA" id="HCGFVER"/>
<dbReference type="PRO" id="PR:F4I8S3"/>
<dbReference type="Proteomes" id="UP000006548">
    <property type="component" value="Chromosome 1"/>
</dbReference>
<dbReference type="ExpressionAtlas" id="F4I8S3">
    <property type="expression patterns" value="baseline and differential"/>
</dbReference>
<dbReference type="GO" id="GO:0005634">
    <property type="term" value="C:nucleus"/>
    <property type="evidence" value="ECO:0007669"/>
    <property type="project" value="UniProtKB-SubCell"/>
</dbReference>
<dbReference type="GO" id="GO:0005524">
    <property type="term" value="F:ATP binding"/>
    <property type="evidence" value="ECO:0007669"/>
    <property type="project" value="UniProtKB-KW"/>
</dbReference>
<dbReference type="GO" id="GO:0003677">
    <property type="term" value="F:DNA binding"/>
    <property type="evidence" value="ECO:0007669"/>
    <property type="project" value="UniProtKB-KW"/>
</dbReference>
<dbReference type="GO" id="GO:0004386">
    <property type="term" value="F:helicase activity"/>
    <property type="evidence" value="ECO:0007669"/>
    <property type="project" value="UniProtKB-KW"/>
</dbReference>
<dbReference type="GO" id="GO:0016787">
    <property type="term" value="F:hydrolase activity"/>
    <property type="evidence" value="ECO:0007669"/>
    <property type="project" value="UniProtKB-KW"/>
</dbReference>
<dbReference type="GO" id="GO:0080188">
    <property type="term" value="P:gene silencing by siRNA-directed DNA methylation"/>
    <property type="evidence" value="ECO:0007669"/>
    <property type="project" value="InterPro"/>
</dbReference>
<dbReference type="GO" id="GO:1900370">
    <property type="term" value="P:positive regulation of post-transcriptional gene silencing by RNA"/>
    <property type="evidence" value="ECO:0000315"/>
    <property type="project" value="TAIR"/>
</dbReference>
<dbReference type="CDD" id="cd18007">
    <property type="entry name" value="DEXHc_ATRX-like"/>
    <property type="match status" value="1"/>
</dbReference>
<dbReference type="CDD" id="cd18793">
    <property type="entry name" value="SF2_C_SNF"/>
    <property type="match status" value="1"/>
</dbReference>
<dbReference type="FunFam" id="3.40.50.300:FF:002151">
    <property type="entry name" value="SNF2 domain-containing protein CLASSY 3"/>
    <property type="match status" value="1"/>
</dbReference>
<dbReference type="FunFam" id="3.40.50.10810:FF:000109">
    <property type="entry name" value="SNF2 domain-containing protein CLASSY 4"/>
    <property type="match status" value="1"/>
</dbReference>
<dbReference type="Gene3D" id="3.40.50.300">
    <property type="entry name" value="P-loop containing nucleotide triphosphate hydrolases"/>
    <property type="match status" value="1"/>
</dbReference>
<dbReference type="Gene3D" id="3.40.50.10810">
    <property type="entry name" value="Tandem AAA-ATPase domain"/>
    <property type="match status" value="1"/>
</dbReference>
<dbReference type="InterPro" id="IPR044567">
    <property type="entry name" value="CLSY/DRD1"/>
</dbReference>
<dbReference type="InterPro" id="IPR014001">
    <property type="entry name" value="Helicase_ATP-bd"/>
</dbReference>
<dbReference type="InterPro" id="IPR001650">
    <property type="entry name" value="Helicase_C-like"/>
</dbReference>
<dbReference type="InterPro" id="IPR027417">
    <property type="entry name" value="P-loop_NTPase"/>
</dbReference>
<dbReference type="InterPro" id="IPR038718">
    <property type="entry name" value="SNF2-like_sf"/>
</dbReference>
<dbReference type="InterPro" id="IPR049730">
    <property type="entry name" value="SNF2/RAD54-like_C"/>
</dbReference>
<dbReference type="InterPro" id="IPR000330">
    <property type="entry name" value="SNF2_N"/>
</dbReference>
<dbReference type="PANTHER" id="PTHR45821">
    <property type="entry name" value="SNF2 DOMAIN-CONTAINING PROTEIN CLASSY 2-RELATED"/>
    <property type="match status" value="1"/>
</dbReference>
<dbReference type="PANTHER" id="PTHR45821:SF6">
    <property type="entry name" value="SNF2 DOMAIN-CONTAINING PROTEIN CLASSY 3"/>
    <property type="match status" value="1"/>
</dbReference>
<dbReference type="Pfam" id="PF00271">
    <property type="entry name" value="Helicase_C"/>
    <property type="match status" value="1"/>
</dbReference>
<dbReference type="Pfam" id="PF00176">
    <property type="entry name" value="SNF2-rel_dom"/>
    <property type="match status" value="1"/>
</dbReference>
<dbReference type="SMART" id="SM00487">
    <property type="entry name" value="DEXDc"/>
    <property type="match status" value="1"/>
</dbReference>
<dbReference type="SMART" id="SM00490">
    <property type="entry name" value="HELICc"/>
    <property type="match status" value="1"/>
</dbReference>
<dbReference type="SUPFAM" id="SSF52540">
    <property type="entry name" value="P-loop containing nucleoside triphosphate hydrolases"/>
    <property type="match status" value="2"/>
</dbReference>
<dbReference type="PROSITE" id="PS51192">
    <property type="entry name" value="HELICASE_ATP_BIND_1"/>
    <property type="match status" value="1"/>
</dbReference>
<dbReference type="PROSITE" id="PS51194">
    <property type="entry name" value="HELICASE_CTER"/>
    <property type="match status" value="1"/>
</dbReference>
<organism>
    <name type="scientific">Arabidopsis thaliana</name>
    <name type="common">Mouse-ear cress</name>
    <dbReference type="NCBI Taxonomy" id="3702"/>
    <lineage>
        <taxon>Eukaryota</taxon>
        <taxon>Viridiplantae</taxon>
        <taxon>Streptophyta</taxon>
        <taxon>Embryophyta</taxon>
        <taxon>Tracheophyta</taxon>
        <taxon>Spermatophyta</taxon>
        <taxon>Magnoliopsida</taxon>
        <taxon>eudicotyledons</taxon>
        <taxon>Gunneridae</taxon>
        <taxon>Pentapetalae</taxon>
        <taxon>rosids</taxon>
        <taxon>malvids</taxon>
        <taxon>Brassicales</taxon>
        <taxon>Brassicaceae</taxon>
        <taxon>Camelineae</taxon>
        <taxon>Arabidopsis</taxon>
    </lineage>
</organism>
<reference key="1">
    <citation type="journal article" date="2000" name="Nature">
        <title>Sequence and analysis of chromosome 1 of the plant Arabidopsis thaliana.</title>
        <authorList>
            <person name="Theologis A."/>
            <person name="Ecker J.R."/>
            <person name="Palm C.J."/>
            <person name="Federspiel N.A."/>
            <person name="Kaul S."/>
            <person name="White O."/>
            <person name="Alonso J."/>
            <person name="Altafi H."/>
            <person name="Araujo R."/>
            <person name="Bowman C.L."/>
            <person name="Brooks S.Y."/>
            <person name="Buehler E."/>
            <person name="Chan A."/>
            <person name="Chao Q."/>
            <person name="Chen H."/>
            <person name="Cheuk R.F."/>
            <person name="Chin C.W."/>
            <person name="Chung M.K."/>
            <person name="Conn L."/>
            <person name="Conway A.B."/>
            <person name="Conway A.R."/>
            <person name="Creasy T.H."/>
            <person name="Dewar K."/>
            <person name="Dunn P."/>
            <person name="Etgu P."/>
            <person name="Feldblyum T.V."/>
            <person name="Feng J.-D."/>
            <person name="Fong B."/>
            <person name="Fujii C.Y."/>
            <person name="Gill J.E."/>
            <person name="Goldsmith A.D."/>
            <person name="Haas B."/>
            <person name="Hansen N.F."/>
            <person name="Hughes B."/>
            <person name="Huizar L."/>
            <person name="Hunter J.L."/>
            <person name="Jenkins J."/>
            <person name="Johnson-Hopson C."/>
            <person name="Khan S."/>
            <person name="Khaykin E."/>
            <person name="Kim C.J."/>
            <person name="Koo H.L."/>
            <person name="Kremenetskaia I."/>
            <person name="Kurtz D.B."/>
            <person name="Kwan A."/>
            <person name="Lam B."/>
            <person name="Langin-Hooper S."/>
            <person name="Lee A."/>
            <person name="Lee J.M."/>
            <person name="Lenz C.A."/>
            <person name="Li J.H."/>
            <person name="Li Y.-P."/>
            <person name="Lin X."/>
            <person name="Liu S.X."/>
            <person name="Liu Z.A."/>
            <person name="Luros J.S."/>
            <person name="Maiti R."/>
            <person name="Marziali A."/>
            <person name="Militscher J."/>
            <person name="Miranda M."/>
            <person name="Nguyen M."/>
            <person name="Nierman W.C."/>
            <person name="Osborne B.I."/>
            <person name="Pai G."/>
            <person name="Peterson J."/>
            <person name="Pham P.K."/>
            <person name="Rizzo M."/>
            <person name="Rooney T."/>
            <person name="Rowley D."/>
            <person name="Sakano H."/>
            <person name="Salzberg S.L."/>
            <person name="Schwartz J.R."/>
            <person name="Shinn P."/>
            <person name="Southwick A.M."/>
            <person name="Sun H."/>
            <person name="Tallon L.J."/>
            <person name="Tambunga G."/>
            <person name="Toriumi M.J."/>
            <person name="Town C.D."/>
            <person name="Utterback T."/>
            <person name="Van Aken S."/>
            <person name="Vaysberg M."/>
            <person name="Vysotskaia V.S."/>
            <person name="Walker M."/>
            <person name="Wu D."/>
            <person name="Yu G."/>
            <person name="Fraser C.M."/>
            <person name="Venter J.C."/>
            <person name="Davis R.W."/>
        </authorList>
    </citation>
    <scope>NUCLEOTIDE SEQUENCE [LARGE SCALE GENOMIC DNA]</scope>
    <source>
        <strain>cv. Columbia</strain>
    </source>
</reference>
<reference key="2">
    <citation type="journal article" date="2017" name="Plant J.">
        <title>Araport11: a complete reannotation of the Arabidopsis thaliana reference genome.</title>
        <authorList>
            <person name="Cheng C.Y."/>
            <person name="Krishnakumar V."/>
            <person name="Chan A.P."/>
            <person name="Thibaud-Nissen F."/>
            <person name="Schobel S."/>
            <person name="Town C.D."/>
        </authorList>
    </citation>
    <scope>GENOME REANNOTATION</scope>
    <source>
        <strain>cv. Columbia</strain>
    </source>
</reference>
<reference key="3">
    <citation type="submission" date="2006-07" db="EMBL/GenBank/DDBJ databases">
        <title>Large-scale analysis of RIKEN Arabidopsis full-length (RAFL) cDNAs.</title>
        <authorList>
            <person name="Totoki Y."/>
            <person name="Seki M."/>
            <person name="Ishida J."/>
            <person name="Nakajima M."/>
            <person name="Enju A."/>
            <person name="Kamiya A."/>
            <person name="Narusaka M."/>
            <person name="Shin-i T."/>
            <person name="Nakagawa M."/>
            <person name="Sakamoto N."/>
            <person name="Oishi K."/>
            <person name="Kohara Y."/>
            <person name="Kobayashi M."/>
            <person name="Toyoda A."/>
            <person name="Sakaki Y."/>
            <person name="Sakurai T."/>
            <person name="Iida K."/>
            <person name="Akiyama K."/>
            <person name="Satou M."/>
            <person name="Toyoda T."/>
            <person name="Konagaya A."/>
            <person name="Carninci P."/>
            <person name="Kawai J."/>
            <person name="Hayashizaki Y."/>
            <person name="Shinozaki K."/>
        </authorList>
    </citation>
    <scope>NUCLEOTIDE SEQUENCE [LARGE SCALE MRNA]</scope>
    <source>
        <strain>cv. Columbia</strain>
    </source>
</reference>
<reference key="4">
    <citation type="journal article" date="2006" name="Genetics">
        <title>Involvement of the Arabidopsis SWI2/SNF2 chromatin remodeling gene family in DNA damage response and recombination.</title>
        <authorList>
            <person name="Shaked H."/>
            <person name="Avivi-Ragolsky N."/>
            <person name="Levy A.A."/>
        </authorList>
    </citation>
    <scope>GENE FAMILY</scope>
    <scope>NOMENCLATURE</scope>
</reference>
<reference key="5">
    <citation type="journal article" date="2007" name="Plant Cell">
        <title>An SNF2 protein associated with nuclear RNA silencing and the spread of a silencing signal between cells in Arabidopsis.</title>
        <authorList>
            <person name="Smith L.M."/>
            <person name="Pontes O."/>
            <person name="Searle I."/>
            <person name="Yelina N."/>
            <person name="Yousafzai F.K."/>
            <person name="Herr A.J."/>
            <person name="Pikaard C.S."/>
            <person name="Baulcombe D.C."/>
        </authorList>
    </citation>
    <scope>IDENTIFICATION</scope>
    <scope>GENE FAMILY</scope>
</reference>
<reference key="6">
    <citation type="journal article" date="2011" name="PLoS Genet.">
        <title>SHH1, a homeodomain protein required for DNA methylation, as well as RDR2, RDM4, and chromatin remodeling factors, associate with RNA polymerase IV.</title>
        <authorList>
            <person name="Law J.A."/>
            <person name="Vashisht A.A."/>
            <person name="Wohlschlegel J.A."/>
            <person name="Jacobsen S.E."/>
        </authorList>
    </citation>
    <scope>IDENTIFICATION BY MASS SPECTROMETRY</scope>
    <scope>INTERACTION WITH NRPD1</scope>
    <scope>NOMENCLATURE</scope>
</reference>
<reference key="7">
    <citation type="journal article" date="2013" name="PLoS ONE">
        <title>Genome-wide comparative in silico analysis of the RNA helicase gene family in Zea mays and Glycine max: a comparison with Arabidopsis and Oryza sativa.</title>
        <authorList>
            <person name="Xu R."/>
            <person name="Zhang S."/>
            <person name="Huang J."/>
            <person name="Zheng C."/>
        </authorList>
    </citation>
    <scope>GENE FAMILY</scope>
</reference>
<proteinExistence type="evidence at protein level"/>
<evidence type="ECO:0000250" key="1"/>
<evidence type="ECO:0000255" key="2"/>
<evidence type="ECO:0000255" key="3">
    <source>
        <dbReference type="PROSITE-ProRule" id="PRU00541"/>
    </source>
</evidence>
<evidence type="ECO:0000255" key="4">
    <source>
        <dbReference type="PROSITE-ProRule" id="PRU00542"/>
    </source>
</evidence>
<evidence type="ECO:0000255" key="5">
    <source>
        <dbReference type="PROSITE-ProRule" id="PRU00768"/>
    </source>
</evidence>
<evidence type="ECO:0000256" key="6">
    <source>
        <dbReference type="SAM" id="MobiDB-lite"/>
    </source>
</evidence>
<evidence type="ECO:0000269" key="7">
    <source>
    </source>
</evidence>
<evidence type="ECO:0000303" key="8">
    <source>
    </source>
</evidence>
<evidence type="ECO:0000305" key="9"/>
<feature type="chain" id="PRO_0000423315" description="SNF2 domain-containing protein CLASSY 3">
    <location>
        <begin position="1"/>
        <end position="1410"/>
    </location>
</feature>
<feature type="domain" description="Helicase ATP-binding" evidence="3">
    <location>
        <begin position="850"/>
        <end position="1060"/>
    </location>
</feature>
<feature type="domain" description="Helicase C-terminal" evidence="4">
    <location>
        <begin position="1206"/>
        <end position="1359"/>
    </location>
</feature>
<feature type="region of interest" description="Disordered" evidence="6">
    <location>
        <begin position="1"/>
        <end position="74"/>
    </location>
</feature>
<feature type="region of interest" description="Disordered" evidence="6">
    <location>
        <begin position="87"/>
        <end position="108"/>
    </location>
</feature>
<feature type="region of interest" description="Disordered" evidence="6">
    <location>
        <begin position="209"/>
        <end position="330"/>
    </location>
</feature>
<feature type="region of interest" description="Disordered" evidence="6">
    <location>
        <begin position="344"/>
        <end position="376"/>
    </location>
</feature>
<feature type="region of interest" description="Disordered" evidence="6">
    <location>
        <begin position="428"/>
        <end position="593"/>
    </location>
</feature>
<feature type="region of interest" description="Disordered" evidence="6">
    <location>
        <begin position="632"/>
        <end position="654"/>
    </location>
</feature>
<feature type="coiled-coil region" evidence="2">
    <location>
        <begin position="248"/>
        <end position="278"/>
    </location>
</feature>
<feature type="coiled-coil region" evidence="2">
    <location>
        <begin position="356"/>
        <end position="377"/>
    </location>
</feature>
<feature type="short sequence motif" description="Nuclear localization signal 1" evidence="5">
    <location>
        <begin position="22"/>
        <end position="29"/>
    </location>
</feature>
<feature type="short sequence motif" description="Nuclear localization signal 2" evidence="5">
    <location>
        <begin position="328"/>
        <end position="335"/>
    </location>
</feature>
<feature type="short sequence motif" description="DEAH box" evidence="3">
    <location>
        <begin position="1011"/>
        <end position="1014"/>
    </location>
</feature>
<feature type="short sequence motif" description="Nuclear localization signal 3" evidence="5">
    <location>
        <begin position="1132"/>
        <end position="1139"/>
    </location>
</feature>
<feature type="compositionally biased region" description="Basic residues" evidence="6">
    <location>
        <begin position="1"/>
        <end position="12"/>
    </location>
</feature>
<feature type="compositionally biased region" description="Polar residues" evidence="6">
    <location>
        <begin position="95"/>
        <end position="108"/>
    </location>
</feature>
<feature type="compositionally biased region" description="Acidic residues" evidence="6">
    <location>
        <begin position="245"/>
        <end position="266"/>
    </location>
</feature>
<feature type="compositionally biased region" description="Low complexity" evidence="6">
    <location>
        <begin position="276"/>
        <end position="301"/>
    </location>
</feature>
<feature type="compositionally biased region" description="Basic and acidic residues" evidence="6">
    <location>
        <begin position="306"/>
        <end position="323"/>
    </location>
</feature>
<feature type="compositionally biased region" description="Basic and acidic residues" evidence="6">
    <location>
        <begin position="351"/>
        <end position="376"/>
    </location>
</feature>
<feature type="compositionally biased region" description="Polar residues" evidence="6">
    <location>
        <begin position="428"/>
        <end position="446"/>
    </location>
</feature>
<feature type="compositionally biased region" description="Basic and acidic residues" evidence="6">
    <location>
        <begin position="450"/>
        <end position="463"/>
    </location>
</feature>
<feature type="compositionally biased region" description="Basic and acidic residues" evidence="6">
    <location>
        <begin position="488"/>
        <end position="504"/>
    </location>
</feature>
<feature type="compositionally biased region" description="Low complexity" evidence="6">
    <location>
        <begin position="576"/>
        <end position="587"/>
    </location>
</feature>
<feature type="binding site" evidence="3">
    <location>
        <begin position="863"/>
        <end position="870"/>
    </location>
    <ligand>
        <name>ATP</name>
        <dbReference type="ChEBI" id="CHEBI:30616"/>
    </ligand>
</feature>
<feature type="sequence conflict" description="In Ref. 3; BAE98499." evidence="9" ref="3">
    <original>S</original>
    <variation>P</variation>
    <location>
        <position position="640"/>
    </location>
</feature>
<protein>
    <recommendedName>
        <fullName>SNF2 domain-containing protein CLASSY 3</fullName>
        <ecNumber>3.6.4.-</ecNumber>
    </recommendedName>
    <alternativeName>
        <fullName evidence="8">Protein CHROMATIN REMODELING 31</fullName>
        <shortName>AtCHR31</shortName>
    </alternativeName>
</protein>
<gene>
    <name type="primary">CLSY3</name>
    <name evidence="8" type="synonym">CHR31</name>
    <name type="ordered locus">At1g05490</name>
    <name type="ORF">T25N20.14</name>
</gene>
<name>CLSY3_ARATH</name>
<accession>F4I8S3</accession>
<accession>Q0WWJ9</accession>
<accession>Q9ZVY9</accession>
<keyword id="KW-0067">ATP-binding</keyword>
<keyword id="KW-0175">Coiled coil</keyword>
<keyword id="KW-0238">DNA-binding</keyword>
<keyword id="KW-0347">Helicase</keyword>
<keyword id="KW-0378">Hydrolase</keyword>
<keyword id="KW-0547">Nucleotide-binding</keyword>
<keyword id="KW-0539">Nucleus</keyword>
<keyword id="KW-1185">Reference proteome</keyword>
<keyword id="KW-0677">Repeat</keyword>